<reference key="1">
    <citation type="submission" date="2009-01" db="EMBL/GenBank/DDBJ databases">
        <title>Complete sequence of Chloroflexus sp. Y-400-fl.</title>
        <authorList>
            <consortium name="US DOE Joint Genome Institute"/>
            <person name="Lucas S."/>
            <person name="Copeland A."/>
            <person name="Lapidus A."/>
            <person name="Glavina del Rio T."/>
            <person name="Dalin E."/>
            <person name="Tice H."/>
            <person name="Bruce D."/>
            <person name="Goodwin L."/>
            <person name="Pitluck S."/>
            <person name="Sims D."/>
            <person name="Kiss H."/>
            <person name="Brettin T."/>
            <person name="Detter J.C."/>
            <person name="Han C."/>
            <person name="Larimer F."/>
            <person name="Land M."/>
            <person name="Hauser L."/>
            <person name="Kyrpides N."/>
            <person name="Ovchinnikova G."/>
            <person name="Bryant D.A."/>
            <person name="Richardson P."/>
        </authorList>
    </citation>
    <scope>NUCLEOTIDE SEQUENCE [LARGE SCALE GENOMIC DNA]</scope>
    <source>
        <strain>ATCC 29364 / DSM 637 / Y-400-fl</strain>
    </source>
</reference>
<organism>
    <name type="scientific">Chloroflexus aurantiacus (strain ATCC 29364 / DSM 637 / Y-400-fl)</name>
    <dbReference type="NCBI Taxonomy" id="480224"/>
    <lineage>
        <taxon>Bacteria</taxon>
        <taxon>Bacillati</taxon>
        <taxon>Chloroflexota</taxon>
        <taxon>Chloroflexia</taxon>
        <taxon>Chloroflexales</taxon>
        <taxon>Chloroflexineae</taxon>
        <taxon>Chloroflexaceae</taxon>
        <taxon>Chloroflexus</taxon>
    </lineage>
</organism>
<feature type="chain" id="PRO_1000194539" description="tRNA pseudouridine synthase A">
    <location>
        <begin position="1"/>
        <end position="278"/>
    </location>
</feature>
<feature type="region of interest" description="Disordered" evidence="2">
    <location>
        <begin position="259"/>
        <end position="278"/>
    </location>
</feature>
<feature type="compositionally biased region" description="Polar residues" evidence="2">
    <location>
        <begin position="261"/>
        <end position="278"/>
    </location>
</feature>
<feature type="active site" description="Nucleophile" evidence="1">
    <location>
        <position position="52"/>
    </location>
</feature>
<feature type="binding site" evidence="1">
    <location>
        <position position="110"/>
    </location>
    <ligand>
        <name>substrate</name>
    </ligand>
</feature>
<name>TRUA_CHLSY</name>
<comment type="function">
    <text evidence="1">Formation of pseudouridine at positions 38, 39 and 40 in the anticodon stem and loop of transfer RNAs.</text>
</comment>
<comment type="catalytic activity">
    <reaction evidence="1">
        <text>uridine(38/39/40) in tRNA = pseudouridine(38/39/40) in tRNA</text>
        <dbReference type="Rhea" id="RHEA:22376"/>
        <dbReference type="Rhea" id="RHEA-COMP:10085"/>
        <dbReference type="Rhea" id="RHEA-COMP:10087"/>
        <dbReference type="ChEBI" id="CHEBI:65314"/>
        <dbReference type="ChEBI" id="CHEBI:65315"/>
        <dbReference type="EC" id="5.4.99.12"/>
    </reaction>
</comment>
<comment type="subunit">
    <text evidence="1">Homodimer.</text>
</comment>
<comment type="similarity">
    <text evidence="1">Belongs to the tRNA pseudouridine synthase TruA family.</text>
</comment>
<keyword id="KW-0413">Isomerase</keyword>
<keyword id="KW-0819">tRNA processing</keyword>
<proteinExistence type="inferred from homology"/>
<dbReference type="EC" id="5.4.99.12" evidence="1"/>
<dbReference type="EMBL" id="CP001364">
    <property type="protein sequence ID" value="ACM53977.1"/>
    <property type="molecule type" value="Genomic_DNA"/>
</dbReference>
<dbReference type="SMR" id="B9LJG1"/>
<dbReference type="KEGG" id="chl:Chy400_2585"/>
<dbReference type="HOGENOM" id="CLU_014673_0_1_0"/>
<dbReference type="OrthoDB" id="9811823at2"/>
<dbReference type="GO" id="GO:0003723">
    <property type="term" value="F:RNA binding"/>
    <property type="evidence" value="ECO:0007669"/>
    <property type="project" value="InterPro"/>
</dbReference>
<dbReference type="GO" id="GO:0160147">
    <property type="term" value="F:tRNA pseudouridine(38-40) synthase activity"/>
    <property type="evidence" value="ECO:0007669"/>
    <property type="project" value="UniProtKB-EC"/>
</dbReference>
<dbReference type="GO" id="GO:0031119">
    <property type="term" value="P:tRNA pseudouridine synthesis"/>
    <property type="evidence" value="ECO:0007669"/>
    <property type="project" value="UniProtKB-UniRule"/>
</dbReference>
<dbReference type="CDD" id="cd02570">
    <property type="entry name" value="PseudoU_synth_EcTruA"/>
    <property type="match status" value="1"/>
</dbReference>
<dbReference type="FunFam" id="3.30.70.580:FF:000001">
    <property type="entry name" value="tRNA pseudouridine synthase A"/>
    <property type="match status" value="1"/>
</dbReference>
<dbReference type="Gene3D" id="3.30.70.660">
    <property type="entry name" value="Pseudouridine synthase I, catalytic domain, C-terminal subdomain"/>
    <property type="match status" value="1"/>
</dbReference>
<dbReference type="Gene3D" id="3.30.70.580">
    <property type="entry name" value="Pseudouridine synthase I, catalytic domain, N-terminal subdomain"/>
    <property type="match status" value="1"/>
</dbReference>
<dbReference type="HAMAP" id="MF_00171">
    <property type="entry name" value="TruA"/>
    <property type="match status" value="1"/>
</dbReference>
<dbReference type="InterPro" id="IPR020103">
    <property type="entry name" value="PsdUridine_synth_cat_dom_sf"/>
</dbReference>
<dbReference type="InterPro" id="IPR001406">
    <property type="entry name" value="PsdUridine_synth_TruA"/>
</dbReference>
<dbReference type="InterPro" id="IPR020097">
    <property type="entry name" value="PsdUridine_synth_TruA_a/b_dom"/>
</dbReference>
<dbReference type="InterPro" id="IPR020095">
    <property type="entry name" value="PsdUridine_synth_TruA_C"/>
</dbReference>
<dbReference type="InterPro" id="IPR020094">
    <property type="entry name" value="TruA/RsuA/RluB/E/F_N"/>
</dbReference>
<dbReference type="NCBIfam" id="TIGR00071">
    <property type="entry name" value="hisT_truA"/>
    <property type="match status" value="1"/>
</dbReference>
<dbReference type="PANTHER" id="PTHR11142">
    <property type="entry name" value="PSEUDOURIDYLATE SYNTHASE"/>
    <property type="match status" value="1"/>
</dbReference>
<dbReference type="PANTHER" id="PTHR11142:SF0">
    <property type="entry name" value="TRNA PSEUDOURIDINE SYNTHASE-LIKE 1"/>
    <property type="match status" value="1"/>
</dbReference>
<dbReference type="Pfam" id="PF01416">
    <property type="entry name" value="PseudoU_synth_1"/>
    <property type="match status" value="2"/>
</dbReference>
<dbReference type="PIRSF" id="PIRSF001430">
    <property type="entry name" value="tRNA_psdUrid_synth"/>
    <property type="match status" value="1"/>
</dbReference>
<dbReference type="SUPFAM" id="SSF55120">
    <property type="entry name" value="Pseudouridine synthase"/>
    <property type="match status" value="1"/>
</dbReference>
<accession>B9LJG1</accession>
<gene>
    <name evidence="1" type="primary">truA</name>
    <name type="ordered locus">Chy400_2585</name>
</gene>
<evidence type="ECO:0000255" key="1">
    <source>
        <dbReference type="HAMAP-Rule" id="MF_00171"/>
    </source>
</evidence>
<evidence type="ECO:0000256" key="2">
    <source>
        <dbReference type="SAM" id="MobiDB-lite"/>
    </source>
</evidence>
<sequence length="278" mass="31003">MRTIALLLAYDGTDFAGSQWQTDIRTVQGALESAWEALTQERRRIVLAGRTDAGVHATGQVAHVQTTTRHNLQTIWRGLNAHLPVDLAIQNVGEAVPDFHARFSAIQREYRYLIDCAAAPLPQLRHQVLHYAGTLDVAAMTAALKLLEGTHDFAAFTTATPAQRSTVRTMYWTRVGDYEWFERRLLAIEVAANAFLQHMVRMIVGTLLLVGRGRMTVDQFGEVLASRDRRLAGPTAPAHGLTLTAVRYPPGLIRWVEPSKRQNGTTKVEQPSSYVHEE</sequence>
<protein>
    <recommendedName>
        <fullName evidence="1">tRNA pseudouridine synthase A</fullName>
        <ecNumber evidence="1">5.4.99.12</ecNumber>
    </recommendedName>
    <alternativeName>
        <fullName evidence="1">tRNA pseudouridine(38-40) synthase</fullName>
    </alternativeName>
    <alternativeName>
        <fullName evidence="1">tRNA pseudouridylate synthase I</fullName>
    </alternativeName>
    <alternativeName>
        <fullName evidence="1">tRNA-uridine isomerase I</fullName>
    </alternativeName>
</protein>